<sequence>MALLLCFVLLCGVVDFARSLSITTPEEMIEKAKGETAYLPCKFTLSPEDQGPLDIEWLISPADNQKVDQVIILYSGDKIYDDYYPDLKGRVHFTSNDLKSGDASINVTNLQLSDIGTYQCKVKKAPGVANKKIHLVVLVKPSGARCYVDGSEEIGSDFKIKCEPKEGSLPLQYEWQKLSDSQKMPTSWLAEMTSSVISVKNASSEYSGTYSCTVRNRVGSDQCLLRLNVVPPSNKAGLIAGAIIGTLLALALIGLIIFCCRKKRREEKYEKEVHHDIREDVPPPKSRTSTARSYIGSNHSSLGSMSPSNMEGYSKTQYNQVPSEDFERTPQSPTLPPAKVAAPNLSRMGAIPVMIPAQSKDGSIV</sequence>
<evidence type="ECO:0000250" key="1"/>
<evidence type="ECO:0000250" key="2">
    <source>
        <dbReference type="UniProtKB" id="P97792"/>
    </source>
</evidence>
<evidence type="ECO:0000255" key="3"/>
<evidence type="ECO:0000255" key="4">
    <source>
        <dbReference type="PROSITE-ProRule" id="PRU00114"/>
    </source>
</evidence>
<evidence type="ECO:0000256" key="5">
    <source>
        <dbReference type="SAM" id="MobiDB-lite"/>
    </source>
</evidence>
<evidence type="ECO:0000269" key="6">
    <source>
    </source>
</evidence>
<evidence type="ECO:0000269" key="7">
    <source>
    </source>
</evidence>
<evidence type="ECO:0000269" key="8">
    <source>
    </source>
</evidence>
<evidence type="ECO:0000269" key="9">
    <source>
    </source>
</evidence>
<evidence type="ECO:0000269" key="10">
    <source>
    </source>
</evidence>
<evidence type="ECO:0000269" key="11">
    <source>
    </source>
</evidence>
<evidence type="ECO:0000269" key="12">
    <source>
    </source>
</evidence>
<evidence type="ECO:0000269" key="13">
    <source>
    </source>
</evidence>
<evidence type="ECO:0000269" key="14">
    <source>
    </source>
</evidence>
<evidence type="ECO:0000269" key="15">
    <source>
    </source>
</evidence>
<evidence type="ECO:0000269" key="16">
    <source>
    </source>
</evidence>
<evidence type="ECO:0000269" key="17">
    <source>
    </source>
</evidence>
<evidence type="ECO:0000269" key="18">
    <source>
    </source>
</evidence>
<evidence type="ECO:0000269" key="19">
    <source>
    </source>
</evidence>
<evidence type="ECO:0000269" key="20">
    <source>
    </source>
</evidence>
<evidence type="ECO:0000269" key="21">
    <source>
    </source>
</evidence>
<evidence type="ECO:0000269" key="22">
    <source>
    </source>
</evidence>
<evidence type="ECO:0000269" key="23">
    <source>
    </source>
</evidence>
<evidence type="ECO:0000269" key="24">
    <source>
    </source>
</evidence>
<evidence type="ECO:0000269" key="25">
    <source>
    </source>
</evidence>
<evidence type="ECO:0000269" key="26">
    <source>
    </source>
</evidence>
<evidence type="ECO:0000303" key="27">
    <source>
    </source>
</evidence>
<evidence type="ECO:0000303" key="28">
    <source ref="7"/>
</evidence>
<evidence type="ECO:0000303" key="29">
    <source ref="8"/>
</evidence>
<evidence type="ECO:0000305" key="30"/>
<evidence type="ECO:0000305" key="31">
    <source>
    </source>
</evidence>
<evidence type="ECO:0007744" key="32">
    <source>
    </source>
</evidence>
<evidence type="ECO:0007744" key="33">
    <source>
    </source>
</evidence>
<evidence type="ECO:0007829" key="34">
    <source>
        <dbReference type="PDB" id="1EAJ"/>
    </source>
</evidence>
<evidence type="ECO:0007829" key="35">
    <source>
        <dbReference type="PDB" id="1RSF"/>
    </source>
</evidence>
<evidence type="ECO:0007829" key="36">
    <source>
        <dbReference type="PDB" id="2NPL"/>
    </source>
</evidence>
<keyword id="KW-0002">3D-structure</keyword>
<keyword id="KW-0025">Alternative splicing</keyword>
<keyword id="KW-0130">Cell adhesion</keyword>
<keyword id="KW-0965">Cell junction</keyword>
<keyword id="KW-1003">Cell membrane</keyword>
<keyword id="KW-1015">Disulfide bond</keyword>
<keyword id="KW-0325">Glycoprotein</keyword>
<keyword id="KW-1183">Host cell receptor for virus entry</keyword>
<keyword id="KW-0945">Host-virus interaction</keyword>
<keyword id="KW-0393">Immunoglobulin domain</keyword>
<keyword id="KW-0449">Lipoprotein</keyword>
<keyword id="KW-0472">Membrane</keyword>
<keyword id="KW-0564">Palmitate</keyword>
<keyword id="KW-0597">Phosphoprotein</keyword>
<keyword id="KW-1267">Proteomics identification</keyword>
<keyword id="KW-0675">Receptor</keyword>
<keyword id="KW-1185">Reference proteome</keyword>
<keyword id="KW-0677">Repeat</keyword>
<keyword id="KW-0964">Secreted</keyword>
<keyword id="KW-0732">Signal</keyword>
<keyword id="KW-0796">Tight junction</keyword>
<keyword id="KW-0812">Transmembrane</keyword>
<keyword id="KW-1133">Transmembrane helix</keyword>
<dbReference type="EMBL" id="U90716">
    <property type="protein sequence ID" value="AAC51234.1"/>
    <property type="molecule type" value="mRNA"/>
</dbReference>
<dbReference type="EMBL" id="Y07593">
    <property type="protein sequence ID" value="CAA68868.1"/>
    <property type="molecule type" value="mRNA"/>
</dbReference>
<dbReference type="EMBL" id="AF169366">
    <property type="protein sequence ID" value="AAF05908.1"/>
    <property type="molecule type" value="Genomic_DNA"/>
</dbReference>
<dbReference type="EMBL" id="AF169360">
    <property type="protein sequence ID" value="AAF05908.1"/>
    <property type="status" value="JOINED"/>
    <property type="molecule type" value="Genomic_DNA"/>
</dbReference>
<dbReference type="EMBL" id="AF169361">
    <property type="protein sequence ID" value="AAF05908.1"/>
    <property type="status" value="JOINED"/>
    <property type="molecule type" value="Genomic_DNA"/>
</dbReference>
<dbReference type="EMBL" id="AF169362">
    <property type="protein sequence ID" value="AAF05908.1"/>
    <property type="status" value="JOINED"/>
    <property type="molecule type" value="Genomic_DNA"/>
</dbReference>
<dbReference type="EMBL" id="AF169363">
    <property type="protein sequence ID" value="AAF05908.1"/>
    <property type="status" value="JOINED"/>
    <property type="molecule type" value="Genomic_DNA"/>
</dbReference>
<dbReference type="EMBL" id="AF169364">
    <property type="protein sequence ID" value="AAF05908.1"/>
    <property type="status" value="JOINED"/>
    <property type="molecule type" value="Genomic_DNA"/>
</dbReference>
<dbReference type="EMBL" id="AF169365">
    <property type="protein sequence ID" value="AAF05908.1"/>
    <property type="status" value="JOINED"/>
    <property type="molecule type" value="Genomic_DNA"/>
</dbReference>
<dbReference type="EMBL" id="AF200465">
    <property type="protein sequence ID" value="AAF24344.1"/>
    <property type="molecule type" value="Genomic_DNA"/>
</dbReference>
<dbReference type="EMBL" id="AY072910">
    <property type="protein sequence ID" value="AAL68878.1"/>
    <property type="molecule type" value="mRNA"/>
</dbReference>
<dbReference type="EMBL" id="AY072911">
    <property type="protein sequence ID" value="AAL68879.1"/>
    <property type="molecule type" value="mRNA"/>
</dbReference>
<dbReference type="EMBL" id="AY072912">
    <property type="protein sequence ID" value="AAL68880.1"/>
    <property type="molecule type" value="mRNA"/>
</dbReference>
<dbReference type="EMBL" id="AF242865">
    <property type="protein sequence ID" value="AAG01088.1"/>
    <property type="molecule type" value="Genomic_DNA"/>
</dbReference>
<dbReference type="EMBL" id="AF242862">
    <property type="protein sequence ID" value="AAG01088.1"/>
    <property type="status" value="JOINED"/>
    <property type="molecule type" value="Genomic_DNA"/>
</dbReference>
<dbReference type="EMBL" id="AF242864">
    <property type="protein sequence ID" value="AAG01088.1"/>
    <property type="status" value="JOINED"/>
    <property type="molecule type" value="Genomic_DNA"/>
</dbReference>
<dbReference type="EMBL" id="GU474812">
    <property type="protein sequence ID" value="ADC84500.1"/>
    <property type="molecule type" value="mRNA"/>
</dbReference>
<dbReference type="EMBL" id="CR617256">
    <property type="status" value="NOT_ANNOTATED_CDS"/>
    <property type="molecule type" value="mRNA"/>
</dbReference>
<dbReference type="EMBL" id="BT019876">
    <property type="protein sequence ID" value="AAV38679.1"/>
    <property type="molecule type" value="mRNA"/>
</dbReference>
<dbReference type="EMBL" id="AK313526">
    <property type="protein sequence ID" value="BAG36305.1"/>
    <property type="molecule type" value="mRNA"/>
</dbReference>
<dbReference type="EMBL" id="AP000963">
    <property type="status" value="NOT_ANNOTATED_CDS"/>
    <property type="molecule type" value="Genomic_DNA"/>
</dbReference>
<dbReference type="EMBL" id="AP000967">
    <property type="status" value="NOT_ANNOTATED_CDS"/>
    <property type="molecule type" value="Genomic_DNA"/>
</dbReference>
<dbReference type="EMBL" id="CH471079">
    <property type="protein sequence ID" value="EAX10031.1"/>
    <property type="molecule type" value="Genomic_DNA"/>
</dbReference>
<dbReference type="EMBL" id="BC003684">
    <property type="protein sequence ID" value="AAH03684.1"/>
    <property type="molecule type" value="mRNA"/>
</dbReference>
<dbReference type="EMBL" id="BC010536">
    <property type="protein sequence ID" value="AAH10536.1"/>
    <property type="molecule type" value="mRNA"/>
</dbReference>
<dbReference type="EMBL" id="AF124598">
    <property type="protein sequence ID" value="AAD31772.1"/>
    <property type="molecule type" value="mRNA"/>
</dbReference>
<dbReference type="CCDS" id="CCDS33519.1">
    <molecule id="P78310-1"/>
</dbReference>
<dbReference type="CCDS" id="CCDS56204.1">
    <molecule id="P78310-6"/>
</dbReference>
<dbReference type="CCDS" id="CCDS56205.1">
    <molecule id="P78310-5"/>
</dbReference>
<dbReference type="CCDS" id="CCDS56206.1">
    <molecule id="P78310-4"/>
</dbReference>
<dbReference type="CCDS" id="CCDS56207.1">
    <molecule id="P78310-3"/>
</dbReference>
<dbReference type="RefSeq" id="NP_001193992.1">
    <molecule id="P78310-5"/>
    <property type="nucleotide sequence ID" value="NM_001207063.2"/>
</dbReference>
<dbReference type="RefSeq" id="NP_001193993.1">
    <molecule id="P78310-4"/>
    <property type="nucleotide sequence ID" value="NM_001207064.2"/>
</dbReference>
<dbReference type="RefSeq" id="NP_001193994.1">
    <molecule id="P78310-3"/>
    <property type="nucleotide sequence ID" value="NM_001207065.2"/>
</dbReference>
<dbReference type="RefSeq" id="NP_001193995.1">
    <molecule id="P78310-6"/>
    <property type="nucleotide sequence ID" value="NM_001207066.2"/>
</dbReference>
<dbReference type="RefSeq" id="NP_001329.1">
    <molecule id="P78310-1"/>
    <property type="nucleotide sequence ID" value="NM_001338.5"/>
</dbReference>
<dbReference type="RefSeq" id="XP_011527781.1">
    <molecule id="P78310-5"/>
    <property type="nucleotide sequence ID" value="XM_011529479.2"/>
</dbReference>
<dbReference type="PDB" id="1EAJ">
    <property type="method" value="X-ray"/>
    <property type="resolution" value="1.35 A"/>
    <property type="chains" value="A/B=15-140"/>
</dbReference>
<dbReference type="PDB" id="1F5W">
    <property type="method" value="X-ray"/>
    <property type="resolution" value="1.70 A"/>
    <property type="chains" value="A/B=15-140"/>
</dbReference>
<dbReference type="PDB" id="1JEW">
    <property type="method" value="EM"/>
    <property type="resolution" value="22.00 A"/>
    <property type="chains" value="R=21-140"/>
</dbReference>
<dbReference type="PDB" id="1KAC">
    <property type="method" value="X-ray"/>
    <property type="resolution" value="2.60 A"/>
    <property type="chains" value="B=22-144"/>
</dbReference>
<dbReference type="PDB" id="1P69">
    <property type="method" value="X-ray"/>
    <property type="resolution" value="3.10 A"/>
    <property type="chains" value="B=22-144"/>
</dbReference>
<dbReference type="PDB" id="1P6A">
    <property type="method" value="X-ray"/>
    <property type="resolution" value="2.90 A"/>
    <property type="chains" value="B=22-144"/>
</dbReference>
<dbReference type="PDB" id="1RSF">
    <property type="method" value="NMR"/>
    <property type="chains" value="A=21-144"/>
</dbReference>
<dbReference type="PDB" id="2J12">
    <property type="method" value="X-ray"/>
    <property type="resolution" value="1.50 A"/>
    <property type="chains" value="B=15-140"/>
</dbReference>
<dbReference type="PDB" id="2J1K">
    <property type="method" value="X-ray"/>
    <property type="resolution" value="2.30 A"/>
    <property type="chains" value="A/B/G/J/K/O/P/T/V/X/Y/Z=15-140"/>
</dbReference>
<dbReference type="PDB" id="2NPL">
    <property type="method" value="NMR"/>
    <property type="chains" value="X=142-235"/>
</dbReference>
<dbReference type="PDB" id="2W9L">
    <property type="method" value="X-ray"/>
    <property type="resolution" value="2.91 A"/>
    <property type="chains" value="A/B/G/J/K/O/P/T/V/X/Y/Z=16-139"/>
</dbReference>
<dbReference type="PDB" id="2WBW">
    <property type="method" value="X-ray"/>
    <property type="resolution" value="1.55 A"/>
    <property type="chains" value="B=15-138"/>
</dbReference>
<dbReference type="PDB" id="3J6L">
    <property type="method" value="EM"/>
    <property type="resolution" value="9.00 A"/>
    <property type="chains" value="B=15-140"/>
</dbReference>
<dbReference type="PDB" id="3J6M">
    <property type="method" value="EM"/>
    <property type="resolution" value="9.00 A"/>
    <property type="chains" value="B=22-144"/>
</dbReference>
<dbReference type="PDB" id="3J6N">
    <property type="method" value="EM"/>
    <property type="resolution" value="9.00 A"/>
    <property type="chains" value="K=20-233"/>
</dbReference>
<dbReference type="PDB" id="3J6O">
    <property type="method" value="EM"/>
    <property type="resolution" value="9.00 A"/>
    <property type="chains" value="S=20-236"/>
</dbReference>
<dbReference type="PDB" id="7DPZ">
    <property type="method" value="EM"/>
    <property type="resolution" value="3.80 A"/>
    <property type="chains" value="K=20-140"/>
</dbReference>
<dbReference type="PDB" id="7DQ1">
    <property type="method" value="EM"/>
    <property type="resolution" value="3.60 A"/>
    <property type="chains" value="K=20-140"/>
</dbReference>
<dbReference type="PDB" id="7VXZ">
    <property type="method" value="EM"/>
    <property type="resolution" value="3.19 A"/>
    <property type="chains" value="E=20-236"/>
</dbReference>
<dbReference type="PDB" id="7VYK">
    <property type="method" value="EM"/>
    <property type="resolution" value="2.79 A"/>
    <property type="chains" value="E=20-236"/>
</dbReference>
<dbReference type="PDB" id="7VYL">
    <property type="method" value="EM"/>
    <property type="resolution" value="2.79 A"/>
    <property type="chains" value="E=20-236"/>
</dbReference>
<dbReference type="PDB" id="7VYM">
    <property type="method" value="EM"/>
    <property type="resolution" value="3.68 A"/>
    <property type="chains" value="E=20-236"/>
</dbReference>
<dbReference type="PDB" id="7W14">
    <property type="method" value="EM"/>
    <property type="resolution" value="2.20 A"/>
    <property type="chains" value="E=20-236"/>
</dbReference>
<dbReference type="PDBsum" id="1EAJ"/>
<dbReference type="PDBsum" id="1F5W"/>
<dbReference type="PDBsum" id="1JEW"/>
<dbReference type="PDBsum" id="1KAC"/>
<dbReference type="PDBsum" id="1P69"/>
<dbReference type="PDBsum" id="1P6A"/>
<dbReference type="PDBsum" id="1RSF"/>
<dbReference type="PDBsum" id="2J12"/>
<dbReference type="PDBsum" id="2J1K"/>
<dbReference type="PDBsum" id="2NPL"/>
<dbReference type="PDBsum" id="2W9L"/>
<dbReference type="PDBsum" id="2WBW"/>
<dbReference type="PDBsum" id="3J6L"/>
<dbReference type="PDBsum" id="3J6M"/>
<dbReference type="PDBsum" id="3J6N"/>
<dbReference type="PDBsum" id="3J6O"/>
<dbReference type="PDBsum" id="7DPZ"/>
<dbReference type="PDBsum" id="7DQ1"/>
<dbReference type="PDBsum" id="7VXZ"/>
<dbReference type="PDBsum" id="7VYK"/>
<dbReference type="PDBsum" id="7VYL"/>
<dbReference type="PDBsum" id="7VYM"/>
<dbReference type="PDBsum" id="7W14"/>
<dbReference type="BMRB" id="P78310"/>
<dbReference type="EMDB" id="EMD-30812"/>
<dbReference type="EMDB" id="EMD-30813"/>
<dbReference type="EMDB" id="EMD-32189"/>
<dbReference type="EMDB" id="EMD-32207"/>
<dbReference type="EMDB" id="EMD-32208"/>
<dbReference type="EMDB" id="EMD-32209"/>
<dbReference type="EMDB" id="EMD-32250"/>
<dbReference type="EMDB" id="EMD-5927"/>
<dbReference type="SMR" id="P78310"/>
<dbReference type="BioGRID" id="107905">
    <property type="interactions" value="372"/>
</dbReference>
<dbReference type="FunCoup" id="P78310">
    <property type="interactions" value="494"/>
</dbReference>
<dbReference type="IntAct" id="P78310">
    <property type="interactions" value="30"/>
</dbReference>
<dbReference type="MINT" id="P78310"/>
<dbReference type="STRING" id="9606.ENSP00000284878"/>
<dbReference type="ChEMBL" id="CHEMBL4879448"/>
<dbReference type="TCDB" id="8.A.23.1.14">
    <property type="family name" value="the basigin (basigin) family"/>
</dbReference>
<dbReference type="UniLectin" id="P78310"/>
<dbReference type="GlyConnect" id="1159">
    <property type="glycosylation" value="1 N-Linked glycan (1 site)"/>
</dbReference>
<dbReference type="GlyCosmos" id="P78310">
    <property type="glycosylation" value="2 sites, 1 glycan"/>
</dbReference>
<dbReference type="GlyGen" id="P78310">
    <property type="glycosylation" value="10 sites, 21 N-linked glycans (4 sites), 1 O-linked glycan (5 sites)"/>
</dbReference>
<dbReference type="iPTMnet" id="P78310"/>
<dbReference type="PhosphoSitePlus" id="P78310"/>
<dbReference type="SwissPalm" id="P78310"/>
<dbReference type="BioMuta" id="CXADR"/>
<dbReference type="DMDM" id="6685351"/>
<dbReference type="jPOST" id="P78310"/>
<dbReference type="MassIVE" id="P78310"/>
<dbReference type="PaxDb" id="9606-ENSP00000284878"/>
<dbReference type="PeptideAtlas" id="P78310"/>
<dbReference type="ProteomicsDB" id="12784"/>
<dbReference type="ProteomicsDB" id="57548">
    <molecule id="P78310-1"/>
</dbReference>
<dbReference type="ProteomicsDB" id="57549">
    <molecule id="P78310-2"/>
</dbReference>
<dbReference type="ProteomicsDB" id="57550">
    <molecule id="P78310-3"/>
</dbReference>
<dbReference type="ProteomicsDB" id="57551">
    <molecule id="P78310-4"/>
</dbReference>
<dbReference type="ProteomicsDB" id="57552">
    <molecule id="P78310-5"/>
</dbReference>
<dbReference type="ProteomicsDB" id="6303"/>
<dbReference type="Pumba" id="P78310"/>
<dbReference type="Antibodypedia" id="1120">
    <property type="antibodies" value="479 antibodies from 40 providers"/>
</dbReference>
<dbReference type="DNASU" id="1525"/>
<dbReference type="Ensembl" id="ENST00000284878.12">
    <molecule id="P78310-1"/>
    <property type="protein sequence ID" value="ENSP00000284878.7"/>
    <property type="gene ID" value="ENSG00000154639.19"/>
</dbReference>
<dbReference type="Ensembl" id="ENST00000356275.10">
    <molecule id="P78310-3"/>
    <property type="protein sequence ID" value="ENSP00000348620.6"/>
    <property type="gene ID" value="ENSG00000154639.19"/>
</dbReference>
<dbReference type="Ensembl" id="ENST00000400165.5">
    <molecule id="P78310-4"/>
    <property type="protein sequence ID" value="ENSP00000383029.1"/>
    <property type="gene ID" value="ENSG00000154639.19"/>
</dbReference>
<dbReference type="Ensembl" id="ENST00000400166.5">
    <molecule id="P78310-5"/>
    <property type="protein sequence ID" value="ENSP00000383030.1"/>
    <property type="gene ID" value="ENSG00000154639.19"/>
</dbReference>
<dbReference type="Ensembl" id="ENST00000400169.1">
    <molecule id="P78310-6"/>
    <property type="protein sequence ID" value="ENSP00000383033.1"/>
    <property type="gene ID" value="ENSG00000154639.19"/>
</dbReference>
<dbReference type="GeneID" id="1525"/>
<dbReference type="KEGG" id="hsa:1525"/>
<dbReference type="MANE-Select" id="ENST00000284878.12">
    <property type="protein sequence ID" value="ENSP00000284878.7"/>
    <property type="RefSeq nucleotide sequence ID" value="NM_001338.5"/>
    <property type="RefSeq protein sequence ID" value="NP_001329.1"/>
</dbReference>
<dbReference type="UCSC" id="uc002ykh.3">
    <molecule id="P78310-1"/>
    <property type="organism name" value="human"/>
</dbReference>
<dbReference type="AGR" id="HGNC:2559"/>
<dbReference type="CTD" id="1525"/>
<dbReference type="DisGeNET" id="1525"/>
<dbReference type="GeneCards" id="CXADR"/>
<dbReference type="HGNC" id="HGNC:2559">
    <property type="gene designation" value="CXADR"/>
</dbReference>
<dbReference type="HPA" id="ENSG00000154639">
    <property type="expression patterns" value="Tissue enhanced (skin)"/>
</dbReference>
<dbReference type="MIM" id="602621">
    <property type="type" value="gene"/>
</dbReference>
<dbReference type="neXtProt" id="NX_P78310"/>
<dbReference type="OpenTargets" id="ENSG00000154639"/>
<dbReference type="PharmGKB" id="PA27055"/>
<dbReference type="VEuPathDB" id="HostDB:ENSG00000154639"/>
<dbReference type="eggNOG" id="ENOG502QSG0">
    <property type="taxonomic scope" value="Eukaryota"/>
</dbReference>
<dbReference type="GeneTree" id="ENSGT00940000154829"/>
<dbReference type="HOGENOM" id="CLU_040549_0_0_1"/>
<dbReference type="InParanoid" id="P78310"/>
<dbReference type="OMA" id="GTKPMQY"/>
<dbReference type="OrthoDB" id="8902063at2759"/>
<dbReference type="PAN-GO" id="P78310">
    <property type="GO annotations" value="5 GO annotations based on evolutionary models"/>
</dbReference>
<dbReference type="PhylomeDB" id="P78310"/>
<dbReference type="TreeFam" id="TF330875"/>
<dbReference type="PathwayCommons" id="P78310"/>
<dbReference type="Reactome" id="R-HSA-198933">
    <property type="pathway name" value="Immunoregulatory interactions between a Lymphoid and a non-Lymphoid cell"/>
</dbReference>
<dbReference type="Reactome" id="R-HSA-202733">
    <property type="pathway name" value="Cell surface interactions at the vascular wall"/>
</dbReference>
<dbReference type="SignaLink" id="P78310"/>
<dbReference type="BioGRID-ORCS" id="1525">
    <property type="hits" value="42 hits in 1133 CRISPR screens"/>
</dbReference>
<dbReference type="ChiTaRS" id="CXADR">
    <property type="organism name" value="human"/>
</dbReference>
<dbReference type="EvolutionaryTrace" id="P78310"/>
<dbReference type="GeneWiki" id="Coxsackie_virus_and_adenovirus_receptor"/>
<dbReference type="GenomeRNAi" id="1525"/>
<dbReference type="Pharos" id="P78310">
    <property type="development level" value="Tbio"/>
</dbReference>
<dbReference type="PRO" id="PR:P78310"/>
<dbReference type="Proteomes" id="UP000005640">
    <property type="component" value="Chromosome 21"/>
</dbReference>
<dbReference type="RNAct" id="P78310">
    <property type="molecule type" value="protein"/>
</dbReference>
<dbReference type="Bgee" id="ENSG00000154639">
    <property type="expression patterns" value="Expressed in nipple and 201 other cell types or tissues"/>
</dbReference>
<dbReference type="GO" id="GO:0001669">
    <property type="term" value="C:acrosomal vesicle"/>
    <property type="evidence" value="ECO:0000250"/>
    <property type="project" value="UniProtKB"/>
</dbReference>
<dbReference type="GO" id="GO:0005912">
    <property type="term" value="C:adherens junction"/>
    <property type="evidence" value="ECO:0000314"/>
    <property type="project" value="UniProtKB"/>
</dbReference>
<dbReference type="GO" id="GO:0016327">
    <property type="term" value="C:apicolateral plasma membrane"/>
    <property type="evidence" value="ECO:0000314"/>
    <property type="project" value="UniProtKB"/>
</dbReference>
<dbReference type="GO" id="GO:0016323">
    <property type="term" value="C:basolateral plasma membrane"/>
    <property type="evidence" value="ECO:0000314"/>
    <property type="project" value="UniProtKB"/>
</dbReference>
<dbReference type="GO" id="GO:0005923">
    <property type="term" value="C:bicellular tight junction"/>
    <property type="evidence" value="ECO:0000314"/>
    <property type="project" value="UniProtKB"/>
</dbReference>
<dbReference type="GO" id="GO:0044297">
    <property type="term" value="C:cell body"/>
    <property type="evidence" value="ECO:0000250"/>
    <property type="project" value="UniProtKB"/>
</dbReference>
<dbReference type="GO" id="GO:0030054">
    <property type="term" value="C:cell junction"/>
    <property type="evidence" value="ECO:0000314"/>
    <property type="project" value="HPA"/>
</dbReference>
<dbReference type="GO" id="GO:0005911">
    <property type="term" value="C:cell-cell junction"/>
    <property type="evidence" value="ECO:0000314"/>
    <property type="project" value="UniProtKB"/>
</dbReference>
<dbReference type="GO" id="GO:0005737">
    <property type="term" value="C:cytoplasm"/>
    <property type="evidence" value="ECO:0000314"/>
    <property type="project" value="CACAO"/>
</dbReference>
<dbReference type="GO" id="GO:0005576">
    <property type="term" value="C:extracellular region"/>
    <property type="evidence" value="ECO:0007669"/>
    <property type="project" value="UniProtKB-SubCell"/>
</dbReference>
<dbReference type="GO" id="GO:0005615">
    <property type="term" value="C:extracellular space"/>
    <property type="evidence" value="ECO:0000314"/>
    <property type="project" value="UniProtKB"/>
</dbReference>
<dbReference type="GO" id="GO:0030175">
    <property type="term" value="C:filopodium"/>
    <property type="evidence" value="ECO:0000250"/>
    <property type="project" value="UniProtKB"/>
</dbReference>
<dbReference type="GO" id="GO:0030426">
    <property type="term" value="C:growth cone"/>
    <property type="evidence" value="ECO:0000250"/>
    <property type="project" value="UniProtKB"/>
</dbReference>
<dbReference type="GO" id="GO:0014704">
    <property type="term" value="C:intercalated disc"/>
    <property type="evidence" value="ECO:0000314"/>
    <property type="project" value="UniProtKB"/>
</dbReference>
<dbReference type="GO" id="GO:0045121">
    <property type="term" value="C:membrane raft"/>
    <property type="evidence" value="ECO:0000314"/>
    <property type="project" value="UniProtKB"/>
</dbReference>
<dbReference type="GO" id="GO:0031594">
    <property type="term" value="C:neuromuscular junction"/>
    <property type="evidence" value="ECO:0000314"/>
    <property type="project" value="UniProtKB"/>
</dbReference>
<dbReference type="GO" id="GO:0043005">
    <property type="term" value="C:neuron projection"/>
    <property type="evidence" value="ECO:0000250"/>
    <property type="project" value="UniProtKB"/>
</dbReference>
<dbReference type="GO" id="GO:0005654">
    <property type="term" value="C:nucleoplasm"/>
    <property type="evidence" value="ECO:0000314"/>
    <property type="project" value="HPA"/>
</dbReference>
<dbReference type="GO" id="GO:0005886">
    <property type="term" value="C:plasma membrane"/>
    <property type="evidence" value="ECO:0000314"/>
    <property type="project" value="HPA"/>
</dbReference>
<dbReference type="GO" id="GO:0032991">
    <property type="term" value="C:protein-containing complex"/>
    <property type="evidence" value="ECO:0000314"/>
    <property type="project" value="UniProtKB"/>
</dbReference>
<dbReference type="GO" id="GO:0008013">
    <property type="term" value="F:beta-catenin binding"/>
    <property type="evidence" value="ECO:0000353"/>
    <property type="project" value="UniProtKB"/>
</dbReference>
<dbReference type="GO" id="GO:0050839">
    <property type="term" value="F:cell adhesion molecule binding"/>
    <property type="evidence" value="ECO:0000353"/>
    <property type="project" value="UniProtKB"/>
</dbReference>
<dbReference type="GO" id="GO:0086082">
    <property type="term" value="F:cell adhesive protein binding involved in AV node cell-bundle of His cell communication"/>
    <property type="evidence" value="ECO:0000305"/>
    <property type="project" value="BHF-UCL"/>
</dbReference>
<dbReference type="GO" id="GO:0071253">
    <property type="term" value="F:connexin binding"/>
    <property type="evidence" value="ECO:0000250"/>
    <property type="project" value="UniProtKB"/>
</dbReference>
<dbReference type="GO" id="GO:0042802">
    <property type="term" value="F:identical protein binding"/>
    <property type="evidence" value="ECO:0000314"/>
    <property type="project" value="UniProtKB"/>
</dbReference>
<dbReference type="GO" id="GO:0005178">
    <property type="term" value="F:integrin binding"/>
    <property type="evidence" value="ECO:0000353"/>
    <property type="project" value="UniProtKB"/>
</dbReference>
<dbReference type="GO" id="GO:0030165">
    <property type="term" value="F:PDZ domain binding"/>
    <property type="evidence" value="ECO:0000353"/>
    <property type="project" value="UniProtKB"/>
</dbReference>
<dbReference type="GO" id="GO:0005102">
    <property type="term" value="F:signaling receptor binding"/>
    <property type="evidence" value="ECO:0000353"/>
    <property type="project" value="UniProtKB"/>
</dbReference>
<dbReference type="GO" id="GO:0001618">
    <property type="term" value="F:virus receptor activity"/>
    <property type="evidence" value="ECO:0007669"/>
    <property type="project" value="UniProtKB-KW"/>
</dbReference>
<dbReference type="GO" id="GO:0030036">
    <property type="term" value="P:actin cytoskeleton organization"/>
    <property type="evidence" value="ECO:0000314"/>
    <property type="project" value="UniProtKB"/>
</dbReference>
<dbReference type="GO" id="GO:0086067">
    <property type="term" value="P:AV node cell to bundle of His cell communication"/>
    <property type="evidence" value="ECO:0000250"/>
    <property type="project" value="UniProtKB"/>
</dbReference>
<dbReference type="GO" id="GO:0086072">
    <property type="term" value="P:AV node cell-bundle of His cell adhesion involved in cell communication"/>
    <property type="evidence" value="ECO:0000250"/>
    <property type="project" value="BHF-UCL"/>
</dbReference>
<dbReference type="GO" id="GO:0055013">
    <property type="term" value="P:cardiac muscle cell development"/>
    <property type="evidence" value="ECO:0000250"/>
    <property type="project" value="UniProtKB"/>
</dbReference>
<dbReference type="GO" id="GO:0045216">
    <property type="term" value="P:cell-cell junction organization"/>
    <property type="evidence" value="ECO:0000250"/>
    <property type="project" value="UniProtKB"/>
</dbReference>
<dbReference type="GO" id="GO:0051607">
    <property type="term" value="P:defense response to virus"/>
    <property type="evidence" value="ECO:0000314"/>
    <property type="project" value="UniProtKB"/>
</dbReference>
<dbReference type="GO" id="GO:0010669">
    <property type="term" value="P:epithelial structure maintenance"/>
    <property type="evidence" value="ECO:0000315"/>
    <property type="project" value="UniProtKB"/>
</dbReference>
<dbReference type="GO" id="GO:0046629">
    <property type="term" value="P:gamma-delta T cell activation"/>
    <property type="evidence" value="ECO:0000250"/>
    <property type="project" value="UniProtKB"/>
</dbReference>
<dbReference type="GO" id="GO:0008354">
    <property type="term" value="P:germ cell migration"/>
    <property type="evidence" value="ECO:0000250"/>
    <property type="project" value="UniProtKB"/>
</dbReference>
<dbReference type="GO" id="GO:0007507">
    <property type="term" value="P:heart development"/>
    <property type="evidence" value="ECO:0000250"/>
    <property type="project" value="UniProtKB"/>
</dbReference>
<dbReference type="GO" id="GO:0007157">
    <property type="term" value="P:heterophilic cell-cell adhesion via plasma membrane cell adhesion molecules"/>
    <property type="evidence" value="ECO:0000314"/>
    <property type="project" value="UniProtKB"/>
</dbReference>
<dbReference type="GO" id="GO:0034109">
    <property type="term" value="P:homotypic cell-cell adhesion"/>
    <property type="evidence" value="ECO:0000314"/>
    <property type="project" value="UniProtKB"/>
</dbReference>
<dbReference type="GO" id="GO:0007005">
    <property type="term" value="P:mitochondrion organization"/>
    <property type="evidence" value="ECO:0000250"/>
    <property type="project" value="UniProtKB"/>
</dbReference>
<dbReference type="GO" id="GO:0030593">
    <property type="term" value="P:neutrophil chemotaxis"/>
    <property type="evidence" value="ECO:0000315"/>
    <property type="project" value="UniProtKB"/>
</dbReference>
<dbReference type="GO" id="GO:0098904">
    <property type="term" value="P:regulation of AV node cell action potential"/>
    <property type="evidence" value="ECO:0000250"/>
    <property type="project" value="BHF-UCL"/>
</dbReference>
<dbReference type="GO" id="GO:0070633">
    <property type="term" value="P:transepithelial transport"/>
    <property type="evidence" value="ECO:0000315"/>
    <property type="project" value="UniProtKB"/>
</dbReference>
<dbReference type="CDD" id="cd20960">
    <property type="entry name" value="IgV_CAR_like"/>
    <property type="match status" value="1"/>
</dbReference>
<dbReference type="FunFam" id="2.60.40.10:FF:000493">
    <property type="entry name" value="Coxsackievirus and adenovirus receptor homolog"/>
    <property type="match status" value="1"/>
</dbReference>
<dbReference type="FunFam" id="2.60.40.10:FF:000095">
    <property type="entry name" value="immunoglobulin superfamily member 11 isoform X1"/>
    <property type="match status" value="1"/>
</dbReference>
<dbReference type="Gene3D" id="2.60.40.10">
    <property type="entry name" value="Immunoglobulins"/>
    <property type="match status" value="2"/>
</dbReference>
<dbReference type="InterPro" id="IPR052307">
    <property type="entry name" value="EJ_Adhesion_Regulator"/>
</dbReference>
<dbReference type="InterPro" id="IPR007110">
    <property type="entry name" value="Ig-like_dom"/>
</dbReference>
<dbReference type="InterPro" id="IPR036179">
    <property type="entry name" value="Ig-like_dom_sf"/>
</dbReference>
<dbReference type="InterPro" id="IPR013783">
    <property type="entry name" value="Ig-like_fold"/>
</dbReference>
<dbReference type="InterPro" id="IPR003599">
    <property type="entry name" value="Ig_sub"/>
</dbReference>
<dbReference type="InterPro" id="IPR003598">
    <property type="entry name" value="Ig_sub2"/>
</dbReference>
<dbReference type="InterPro" id="IPR013106">
    <property type="entry name" value="Ig_V-set"/>
</dbReference>
<dbReference type="PANTHER" id="PTHR44468:SF3">
    <property type="entry name" value="COXSACKIEVIRUS AND ADENOVIRUS RECEPTOR"/>
    <property type="match status" value="1"/>
</dbReference>
<dbReference type="PANTHER" id="PTHR44468">
    <property type="entry name" value="COXSACKIEVIRUS AND ADENOVIRUS RECEPTOR-RELATED"/>
    <property type="match status" value="1"/>
</dbReference>
<dbReference type="Pfam" id="PF13927">
    <property type="entry name" value="Ig_3"/>
    <property type="match status" value="1"/>
</dbReference>
<dbReference type="Pfam" id="PF07686">
    <property type="entry name" value="V-set"/>
    <property type="match status" value="1"/>
</dbReference>
<dbReference type="SMART" id="SM00409">
    <property type="entry name" value="IG"/>
    <property type="match status" value="2"/>
</dbReference>
<dbReference type="SMART" id="SM00408">
    <property type="entry name" value="IGc2"/>
    <property type="match status" value="2"/>
</dbReference>
<dbReference type="SMART" id="SM00406">
    <property type="entry name" value="IGv"/>
    <property type="match status" value="1"/>
</dbReference>
<dbReference type="SUPFAM" id="SSF48726">
    <property type="entry name" value="Immunoglobulin"/>
    <property type="match status" value="2"/>
</dbReference>
<dbReference type="PROSITE" id="PS50835">
    <property type="entry name" value="IG_LIKE"/>
    <property type="match status" value="2"/>
</dbReference>
<proteinExistence type="evidence at protein level"/>
<reference key="1">
    <citation type="journal article" date="1997" name="Proc. Natl. Acad. Sci. U.S.A.">
        <title>HCAR and MCAR: the human and mouse cellular receptors for subgroup C adenoviruses and group B coxsackieviruses.</title>
        <authorList>
            <person name="Tomko R.P."/>
            <person name="Xu R."/>
            <person name="Philipson L."/>
        </authorList>
    </citation>
    <scope>NUCLEOTIDE SEQUENCE [MRNA] (ISOFORM 1)</scope>
    <scope>FUNCTION AS A VIRUS RECEPTOR</scope>
    <scope>TISSUE SPECIFICITY</scope>
</reference>
<reference key="2">
    <citation type="journal article" date="1997" name="Science">
        <title>Isolation of a common receptor for Coxsackie B viruses and adenoviruses 2 and 5.</title>
        <authorList>
            <person name="Bergelson J.M."/>
            <person name="Cunningham J.A."/>
            <person name="Droguett G."/>
            <person name="Kurt-Jones E."/>
            <person name="Krithivas A."/>
            <person name="Hong J.S."/>
            <person name="Horwitz M.S."/>
            <person name="Crowell R.L."/>
            <person name="Finberg R.W."/>
        </authorList>
    </citation>
    <scope>NUCLEOTIDE SEQUENCE [MRNA] (ISOFORM 1)</scope>
</reference>
<reference key="3">
    <citation type="journal article" date="1999" name="Hum. Genet.">
        <title>Genomic organization and chromosomal localization of the human Coxsackievirus B-adenovirus receptor gene.</title>
        <authorList>
            <person name="Bowles K.R."/>
            <person name="Gibson J."/>
            <person name="Wu J."/>
            <person name="Shaffer L.G."/>
            <person name="Towbin J.A."/>
            <person name="Bowles N.E."/>
        </authorList>
    </citation>
    <scope>NUCLEOTIDE SEQUENCE [GENOMIC DNA]</scope>
</reference>
<reference key="4">
    <citation type="journal article" date="2001" name="Nat. Struct. Biol.">
        <title>Interaction of coxsackievirus B3 with the full length coxsackievirus-adenovirus receptor.</title>
        <authorList>
            <person name="He Y."/>
            <person name="Chipman P.R."/>
            <person name="Howitt J."/>
            <person name="Bator C.M."/>
            <person name="Whitt M.A."/>
            <person name="Baker T.S."/>
            <person name="Kuhn R.J."/>
            <person name="Anderson C.W."/>
            <person name="Freimuth P."/>
            <person name="Rossmann M.G."/>
        </authorList>
    </citation>
    <scope>NUCLEOTIDE SEQUENCE [GENOMIC DNA]</scope>
</reference>
<reference key="5">
    <citation type="journal article" date="2004" name="J. Biol. Chem.">
        <title>Alternatively spliced soluble coxsackie-adenovirus receptors inhibit coxsackievirus infection.</title>
        <authorList>
            <person name="Doerner A."/>
            <person name="Xiong D."/>
            <person name="Couch K."/>
            <person name="Yajima T."/>
            <person name="Knowlton K.U."/>
        </authorList>
    </citation>
    <scope>FUNCTION (MICROBIAL INFECTION)</scope>
    <scope>NUCLEOTIDE SEQUENCE [MRNA] (ISOFORMS 3; 4 AND 5)</scope>
    <scope>INTERACTION WITH COXSACKIEVIRUS TYPE B3</scope>
    <scope>SUBCELLULAR LOCATION</scope>
</reference>
<reference key="6">
    <citation type="submission" date="2000-03" db="EMBL/GenBank/DDBJ databases">
        <title>Putative regulatory domains in the human and mouse CAR genes.</title>
        <authorList>
            <person name="Andersson B."/>
            <person name="Tomko R.P."/>
            <person name="Andersson K."/>
            <person name="Darban H."/>
            <person name="Oncu D."/>
            <person name="Mizra M."/>
            <person name="Sollerbrant K."/>
            <person name="Sonnhammer E."/>
            <person name="Philipson L."/>
        </authorList>
    </citation>
    <scope>NUCLEOTIDE SEQUENCE [GENOMIC DNA]</scope>
</reference>
<reference key="7">
    <citation type="submission" date="2010-01" db="EMBL/GenBank/DDBJ databases">
        <title>Identification and characterisation of CAR 4/6 as a new splice variant of the Coxsackie adenovirus receptor (CAR).</title>
        <authorList>
            <person name="Dietel M."/>
        </authorList>
    </citation>
    <scope>NUCLEOTIDE SEQUENCE [MRNA] (ISOFORM 7)</scope>
</reference>
<reference key="8">
    <citation type="submission" date="2004-07" db="EMBL/GenBank/DDBJ databases">
        <title>Full-length cDNA libraries and normalization.</title>
        <authorList>
            <person name="Li W.B."/>
            <person name="Gruber C."/>
            <person name="Jessee J."/>
            <person name="Polayes D."/>
        </authorList>
    </citation>
    <scope>NUCLEOTIDE SEQUENCE [LARGE SCALE MRNA] (ISOFORM 2)</scope>
    <source>
        <tissue>Cervix</tissue>
    </source>
</reference>
<reference key="9">
    <citation type="submission" date="2004-10" db="EMBL/GenBank/DDBJ databases">
        <title>Cloning of human full-length CDSs in BD Creator(TM) system donor vector.</title>
        <authorList>
            <person name="Kalnine N."/>
            <person name="Chen X."/>
            <person name="Rolfs A."/>
            <person name="Halleck A."/>
            <person name="Hines L."/>
            <person name="Eisenstein S."/>
            <person name="Koundinya M."/>
            <person name="Raphael J."/>
            <person name="Moreira D."/>
            <person name="Kelley T."/>
            <person name="LaBaer J."/>
            <person name="Lin Y."/>
            <person name="Phelan M."/>
            <person name="Farmer A."/>
        </authorList>
    </citation>
    <scope>NUCLEOTIDE SEQUENCE [LARGE SCALE MRNA] (ISOFORM 1)</scope>
</reference>
<reference key="10">
    <citation type="journal article" date="2004" name="Nat. Genet.">
        <title>Complete sequencing and characterization of 21,243 full-length human cDNAs.</title>
        <authorList>
            <person name="Ota T."/>
            <person name="Suzuki Y."/>
            <person name="Nishikawa T."/>
            <person name="Otsuki T."/>
            <person name="Sugiyama T."/>
            <person name="Irie R."/>
            <person name="Wakamatsu A."/>
            <person name="Hayashi K."/>
            <person name="Sato H."/>
            <person name="Nagai K."/>
            <person name="Kimura K."/>
            <person name="Makita H."/>
            <person name="Sekine M."/>
            <person name="Obayashi M."/>
            <person name="Nishi T."/>
            <person name="Shibahara T."/>
            <person name="Tanaka T."/>
            <person name="Ishii S."/>
            <person name="Yamamoto J."/>
            <person name="Saito K."/>
            <person name="Kawai Y."/>
            <person name="Isono Y."/>
            <person name="Nakamura Y."/>
            <person name="Nagahari K."/>
            <person name="Murakami K."/>
            <person name="Yasuda T."/>
            <person name="Iwayanagi T."/>
            <person name="Wagatsuma M."/>
            <person name="Shiratori A."/>
            <person name="Sudo H."/>
            <person name="Hosoiri T."/>
            <person name="Kaku Y."/>
            <person name="Kodaira H."/>
            <person name="Kondo H."/>
            <person name="Sugawara M."/>
            <person name="Takahashi M."/>
            <person name="Kanda K."/>
            <person name="Yokoi T."/>
            <person name="Furuya T."/>
            <person name="Kikkawa E."/>
            <person name="Omura Y."/>
            <person name="Abe K."/>
            <person name="Kamihara K."/>
            <person name="Katsuta N."/>
            <person name="Sato K."/>
            <person name="Tanikawa M."/>
            <person name="Yamazaki M."/>
            <person name="Ninomiya K."/>
            <person name="Ishibashi T."/>
            <person name="Yamashita H."/>
            <person name="Murakawa K."/>
            <person name="Fujimori K."/>
            <person name="Tanai H."/>
            <person name="Kimata M."/>
            <person name="Watanabe M."/>
            <person name="Hiraoka S."/>
            <person name="Chiba Y."/>
            <person name="Ishida S."/>
            <person name="Ono Y."/>
            <person name="Takiguchi S."/>
            <person name="Watanabe S."/>
            <person name="Yosida M."/>
            <person name="Hotuta T."/>
            <person name="Kusano J."/>
            <person name="Kanehori K."/>
            <person name="Takahashi-Fujii A."/>
            <person name="Hara H."/>
            <person name="Tanase T.-O."/>
            <person name="Nomura Y."/>
            <person name="Togiya S."/>
            <person name="Komai F."/>
            <person name="Hara R."/>
            <person name="Takeuchi K."/>
            <person name="Arita M."/>
            <person name="Imose N."/>
            <person name="Musashino K."/>
            <person name="Yuuki H."/>
            <person name="Oshima A."/>
            <person name="Sasaki N."/>
            <person name="Aotsuka S."/>
            <person name="Yoshikawa Y."/>
            <person name="Matsunawa H."/>
            <person name="Ichihara T."/>
            <person name="Shiohata N."/>
            <person name="Sano S."/>
            <person name="Moriya S."/>
            <person name="Momiyama H."/>
            <person name="Satoh N."/>
            <person name="Takami S."/>
            <person name="Terashima Y."/>
            <person name="Suzuki O."/>
            <person name="Nakagawa S."/>
            <person name="Senoh A."/>
            <person name="Mizoguchi H."/>
            <person name="Goto Y."/>
            <person name="Shimizu F."/>
            <person name="Wakebe H."/>
            <person name="Hishigaki H."/>
            <person name="Watanabe T."/>
            <person name="Sugiyama A."/>
            <person name="Takemoto M."/>
            <person name="Kawakami B."/>
            <person name="Yamazaki M."/>
            <person name="Watanabe K."/>
            <person name="Kumagai A."/>
            <person name="Itakura S."/>
            <person name="Fukuzumi Y."/>
            <person name="Fujimori Y."/>
            <person name="Komiyama M."/>
            <person name="Tashiro H."/>
            <person name="Tanigami A."/>
            <person name="Fujiwara T."/>
            <person name="Ono T."/>
            <person name="Yamada K."/>
            <person name="Fujii Y."/>
            <person name="Ozaki K."/>
            <person name="Hirao M."/>
            <person name="Ohmori Y."/>
            <person name="Kawabata A."/>
            <person name="Hikiji T."/>
            <person name="Kobatake N."/>
            <person name="Inagaki H."/>
            <person name="Ikema Y."/>
            <person name="Okamoto S."/>
            <person name="Okitani R."/>
            <person name="Kawakami T."/>
            <person name="Noguchi S."/>
            <person name="Itoh T."/>
            <person name="Shigeta K."/>
            <person name="Senba T."/>
            <person name="Matsumura K."/>
            <person name="Nakajima Y."/>
            <person name="Mizuno T."/>
            <person name="Morinaga M."/>
            <person name="Sasaki M."/>
            <person name="Togashi T."/>
            <person name="Oyama M."/>
            <person name="Hata H."/>
            <person name="Watanabe M."/>
            <person name="Komatsu T."/>
            <person name="Mizushima-Sugano J."/>
            <person name="Satoh T."/>
            <person name="Shirai Y."/>
            <person name="Takahashi Y."/>
            <person name="Nakagawa K."/>
            <person name="Okumura K."/>
            <person name="Nagase T."/>
            <person name="Nomura N."/>
            <person name="Kikuchi H."/>
            <person name="Masuho Y."/>
            <person name="Yamashita R."/>
            <person name="Nakai K."/>
            <person name="Yada T."/>
            <person name="Nakamura Y."/>
            <person name="Ohara O."/>
            <person name="Isogai T."/>
            <person name="Sugano S."/>
        </authorList>
    </citation>
    <scope>NUCLEOTIDE SEQUENCE [LARGE SCALE MRNA] (ISOFORM 1)</scope>
</reference>
<reference key="11">
    <citation type="journal article" date="2000" name="Nature">
        <title>The DNA sequence of human chromosome 21.</title>
        <authorList>
            <person name="Hattori M."/>
            <person name="Fujiyama A."/>
            <person name="Taylor T.D."/>
            <person name="Watanabe H."/>
            <person name="Yada T."/>
            <person name="Park H.-S."/>
            <person name="Toyoda A."/>
            <person name="Ishii K."/>
            <person name="Totoki Y."/>
            <person name="Choi D.-K."/>
            <person name="Groner Y."/>
            <person name="Soeda E."/>
            <person name="Ohki M."/>
            <person name="Takagi T."/>
            <person name="Sakaki Y."/>
            <person name="Taudien S."/>
            <person name="Blechschmidt K."/>
            <person name="Polley A."/>
            <person name="Menzel U."/>
            <person name="Delabar J."/>
            <person name="Kumpf K."/>
            <person name="Lehmann R."/>
            <person name="Patterson D."/>
            <person name="Reichwald K."/>
            <person name="Rump A."/>
            <person name="Schillhabel M."/>
            <person name="Schudy A."/>
            <person name="Zimmermann W."/>
            <person name="Rosenthal A."/>
            <person name="Kudoh J."/>
            <person name="Shibuya K."/>
            <person name="Kawasaki K."/>
            <person name="Asakawa S."/>
            <person name="Shintani A."/>
            <person name="Sasaki T."/>
            <person name="Nagamine K."/>
            <person name="Mitsuyama S."/>
            <person name="Antonarakis S.E."/>
            <person name="Minoshima S."/>
            <person name="Shimizu N."/>
            <person name="Nordsiek G."/>
            <person name="Hornischer K."/>
            <person name="Brandt P."/>
            <person name="Scharfe M."/>
            <person name="Schoen O."/>
            <person name="Desario A."/>
            <person name="Reichelt J."/>
            <person name="Kauer G."/>
            <person name="Bloecker H."/>
            <person name="Ramser J."/>
            <person name="Beck A."/>
            <person name="Klages S."/>
            <person name="Hennig S."/>
            <person name="Riesselmann L."/>
            <person name="Dagand E."/>
            <person name="Wehrmeyer S."/>
            <person name="Borzym K."/>
            <person name="Gardiner K."/>
            <person name="Nizetic D."/>
            <person name="Francis F."/>
            <person name="Lehrach H."/>
            <person name="Reinhardt R."/>
            <person name="Yaspo M.-L."/>
        </authorList>
    </citation>
    <scope>NUCLEOTIDE SEQUENCE [LARGE SCALE GENOMIC DNA]</scope>
</reference>
<reference key="12">
    <citation type="submission" date="2005-09" db="EMBL/GenBank/DDBJ databases">
        <authorList>
            <person name="Mural R.J."/>
            <person name="Istrail S."/>
            <person name="Sutton G.G."/>
            <person name="Florea L."/>
            <person name="Halpern A.L."/>
            <person name="Mobarry C.M."/>
            <person name="Lippert R."/>
            <person name="Walenz B."/>
            <person name="Shatkay H."/>
            <person name="Dew I."/>
            <person name="Miller J.R."/>
            <person name="Flanigan M.J."/>
            <person name="Edwards N.J."/>
            <person name="Bolanos R."/>
            <person name="Fasulo D."/>
            <person name="Halldorsson B.V."/>
            <person name="Hannenhalli S."/>
            <person name="Turner R."/>
            <person name="Yooseph S."/>
            <person name="Lu F."/>
            <person name="Nusskern D.R."/>
            <person name="Shue B.C."/>
            <person name="Zheng X.H."/>
            <person name="Zhong F."/>
            <person name="Delcher A.L."/>
            <person name="Huson D.H."/>
            <person name="Kravitz S.A."/>
            <person name="Mouchard L."/>
            <person name="Reinert K."/>
            <person name="Remington K.A."/>
            <person name="Clark A.G."/>
            <person name="Waterman M.S."/>
            <person name="Eichler E.E."/>
            <person name="Adams M.D."/>
            <person name="Hunkapiller M.W."/>
            <person name="Myers E.W."/>
            <person name="Venter J.C."/>
        </authorList>
    </citation>
    <scope>NUCLEOTIDE SEQUENCE [LARGE SCALE GENOMIC DNA]</scope>
</reference>
<reference key="13">
    <citation type="journal article" date="2004" name="Genome Res.">
        <title>The status, quality, and expansion of the NIH full-length cDNA project: the Mammalian Gene Collection (MGC).</title>
        <authorList>
            <consortium name="The MGC Project Team"/>
        </authorList>
    </citation>
    <scope>NUCLEOTIDE SEQUENCE [LARGE SCALE MRNA] (ISOFORM 1)</scope>
    <source>
        <tissue>Cervix</tissue>
    </source>
</reference>
<reference key="14">
    <citation type="journal article" date="1999" name="Gene Ther.">
        <title>Expression of Coxsackie-adenovirus-receptor and alpha v-integrin does not correlate with adenovector targeting in vivo indicating anatomical vector barriers.</title>
        <authorList>
            <person name="Fechner H."/>
            <person name="Haack A."/>
            <person name="Wang H."/>
            <person name="Wang X."/>
            <person name="Eizema K."/>
            <person name="Pauschinger M."/>
            <person name="Schoemaker R.G."/>
            <person name="van Veghel R."/>
            <person name="Houtsmuller A.B."/>
            <person name="Schultheiss H.-P."/>
            <person name="Lamers J.M.J."/>
            <person name="Poller W."/>
        </authorList>
    </citation>
    <scope>PARTIAL NUCLEOTIDE SEQUENCE [MRNA] (ISOFORM 2)</scope>
    <scope>TISSUE SPECIFICITY</scope>
    <source>
        <tissue>Liver</tissue>
    </source>
</reference>
<reference key="15">
    <citation type="journal article" date="1998" name="J. Virol.">
        <title>The coxsackievirus-adenovirus receptor protein can function as a cellular attachment protein for adenovirus serotypes from subgroups A, C, D, E, and F.</title>
        <authorList>
            <person name="Roelvink P.W."/>
            <person name="Lizonova A."/>
            <person name="Lee J.G.M."/>
            <person name="Li Y."/>
            <person name="Bergelson J.M."/>
            <person name="Finberg R.W."/>
            <person name="Brough D.E."/>
            <person name="Kovesdi I."/>
            <person name="Wickham T.J."/>
        </authorList>
    </citation>
    <scope>FUNCTION (MICROBIAL INFECTION)</scope>
    <scope>INTERACTION WITH HUMAN ADENOVIRUS SUBGROUPS A/C/D/E/F FIBER PROTEINS</scope>
</reference>
<reference key="16">
    <citation type="journal article" date="2000" name="Exp. Cell Res.">
        <title>Expression of the adenovirus receptor and its interaction with the fiber knob.</title>
        <authorList>
            <person name="Tomko R.P."/>
            <person name="Johansson C.B."/>
            <person name="Totrov M."/>
            <person name="Abagyan R."/>
            <person name="Frisen J."/>
            <person name="Philipson L."/>
        </authorList>
    </citation>
    <scope>FUNCTION (MICROBIAL INFECTION)</scope>
    <scope>INTERACTION WITH HUMAN ADENOVIRUS FIBER PROTEIN</scope>
    <scope>MUTAGENESIS OF 70-VAL--ILE-72</scope>
</reference>
<reference key="17">
    <citation type="journal article" date="2000" name="Virology">
        <title>The coxsackie-adenovirus receptor (CAR) is used by reference strains and clinical isolates representing all six serotypes of coxsackievirus group B and by swine vesicular disease virus.</title>
        <authorList>
            <person name="Martino T.A."/>
            <person name="Petric M."/>
            <person name="Weingartl H."/>
            <person name="Bergelson J.M."/>
            <person name="Opavsky M.A."/>
            <person name="Richardson C.D."/>
            <person name="Modlin J.F."/>
            <person name="Finberg R.W."/>
            <person name="Kain K.C."/>
            <person name="Willis N."/>
            <person name="Gauntt C.J."/>
            <person name="Liu P.P."/>
        </authorList>
    </citation>
    <scope>FUNCTION (MICROBIAL INFECTION)</scope>
    <scope>INTERACTION WITH COXSACKIEVIRUS GROUP B CAPSID PROTEINS</scope>
</reference>
<reference key="18">
    <citation type="journal article" date="2001" name="Biochem. Biophys. Res. Commun.">
        <title>Identification of alternative splice products encoded by the human coxsackie-adenovirus receptor gene.</title>
        <authorList>
            <person name="Thoelen I."/>
            <person name="Magnusson C."/>
            <person name="Tagerud S."/>
            <person name="Polacek C."/>
            <person name="Lindberg M."/>
            <person name="Van Ranst M."/>
        </authorList>
    </citation>
    <scope>ALTERNATIVE SPLICING</scope>
    <scope>TISSUE SPECIFICITY</scope>
</reference>
<reference key="19">
    <citation type="journal article" date="2001" name="Circulation">
        <title>Human coxsackie-adenovirus receptor is colocalized with integrins alpha(v)beta(3) and alpha(v)beta(5) on the cardiomyocyte sarcolemma and upregulated in dilated cardiomyopathy: implications for cardiotropic viral infections.</title>
        <authorList>
            <person name="Noutsias M."/>
            <person name="Fechner H."/>
            <person name="de Jonge H."/>
            <person name="Wang X."/>
            <person name="Dekkers D."/>
            <person name="Houtsmuller A.B."/>
            <person name="Pauschinger M."/>
            <person name="Bergelson J.M."/>
            <person name="Warraich R."/>
            <person name="Yacoub M."/>
            <person name="Hetzer R."/>
            <person name="Lamers J.M.J."/>
            <person name="Schultheiss H.-P."/>
            <person name="Poller W."/>
        </authorList>
    </citation>
    <scope>TISSUE SPECIFICITY</scope>
</reference>
<reference key="20">
    <citation type="journal article" date="2001" name="J. Biol. Chem.">
        <title>Multiple regions within the coxsackievirus and adenovirus receptor cytoplasmic domain are required for basolateral sorting.</title>
        <authorList>
            <person name="Cohen C.J."/>
            <person name="Gaetz J."/>
            <person name="Ohman T."/>
            <person name="Bergelson J.M."/>
        </authorList>
    </citation>
    <scope>SUBCELLULAR LOCATION</scope>
    <scope>MUTAGENESIS OF TYR-318 AND 345-LEU--MET-348</scope>
</reference>
<reference key="21">
    <citation type="journal article" date="2001" name="Proc. Natl. Acad. Sci. U.S.A.">
        <title>The coxsackievirus and adenovirus receptor is a transmembrane component of the tight junction.</title>
        <authorList>
            <person name="Cohen C.J."/>
            <person name="Shieh J.T.C."/>
            <person name="Pickles R.J."/>
            <person name="Okegawa T."/>
            <person name="Hsieh J.-T."/>
            <person name="Bergelson J.M."/>
        </authorList>
    </citation>
    <scope>SUBCELLULAR LOCATION</scope>
    <scope>INTERACTION WITH TJP1</scope>
    <scope>FUNCTION</scope>
</reference>
<reference key="22">
    <citation type="journal article" date="2002" name="Cell">
        <title>Adenovirus fiber disrupts CAR-mediated intercellular adhesion allowing virus escape.</title>
        <authorList>
            <person name="Walters R.W."/>
            <person name="Freimuth P."/>
            <person name="Moninger T.O."/>
            <person name="Ganske I."/>
            <person name="Zabner J."/>
            <person name="Welsh M.J."/>
        </authorList>
    </citation>
    <scope>FUNCTION (MICROBIAL INFECTION)</scope>
    <scope>SUBCELLULAR LOCATION</scope>
    <scope>INTERACTION WITH CTNNB1</scope>
    <scope>INTERACTION WITH HUMAN ADENOVIRUS FIBER PROTEIN</scope>
</reference>
<reference key="23">
    <citation type="journal article" date="2002" name="J. Virol.">
        <title>Fatty acid modification of the coxsackievirus and adenovirus receptor.</title>
        <authorList>
            <person name="van't Hof W."/>
            <person name="Crystal R.G."/>
        </authorList>
    </citation>
    <scope>PALMITOYLATION AT CYS-259 AND CYS-260</scope>
    <scope>SUBCELLULAR LOCATION</scope>
    <scope>MUTAGENESIS OF 259-CYS-CYS-260</scope>
</reference>
<reference key="24">
    <citation type="journal article" date="2003" name="J. Biol. Chem.">
        <title>The Coxsackievirus and adenovirus receptor (CAR) forms a complex with the PDZ domain-containing protein ligand-of-numb protein-X (LNX).</title>
        <authorList>
            <person name="Sollerbrant K."/>
            <person name="Raschperger E."/>
            <person name="Mirza M."/>
            <person name="Engstroem U."/>
            <person name="Philipson L."/>
            <person name="Ljungdahl P.O."/>
            <person name="Pettersson R.F."/>
        </authorList>
    </citation>
    <scope>INTERACTION WITH LNX</scope>
</reference>
<reference key="25">
    <citation type="journal article" date="2004" name="BMC Cell Biol.">
        <title>Isoform-specific expression of the Coxsackie and adenovirus receptor (CAR) in neuromuscular junction and cardiac intercalated discs.</title>
        <authorList>
            <person name="Shaw C.A."/>
            <person name="Holland P.C."/>
            <person name="Sinnreich M."/>
            <person name="Allen C."/>
            <person name="Sollerbrant K."/>
            <person name="Karpati G."/>
            <person name="Nalbantoglu J."/>
        </authorList>
    </citation>
    <scope>SUBCELLULAR LOCATION</scope>
    <scope>TISSUE SPECIFICITY (ISOFORMS 1 AND 2)</scope>
</reference>
<reference key="26">
    <citation type="journal article" date="2004" name="J. Biol. Chem.">
        <title>The coxsackievirus and adenovirus receptor interacts with the multi-PDZ domain protein-1 (MUPP-1) within the tight junction.</title>
        <authorList>
            <person name="Coyne C.B."/>
            <person name="Voelker T."/>
            <person name="Pichla S.L."/>
            <person name="Bergelson J.M."/>
        </authorList>
    </citation>
    <scope>INTERACTION WITH MPDZ</scope>
    <scope>SUBCELLULAR LOCATION</scope>
</reference>
<reference key="27">
    <citation type="journal article" date="2004" name="J. Cell Sci.">
        <title>A role for the PDZ-binding domain of the coxsackie B virus and adenovirus receptor (CAR) in cell adhesion and growth.</title>
        <authorList>
            <person name="Ashbourne-Excoffon K.J.D."/>
            <person name="Hruska-Hageman A.M."/>
            <person name="Klotz M."/>
            <person name="Traver G.L."/>
            <person name="Zabner J."/>
        </authorList>
    </citation>
    <scope>INTERACTION WITH MAGI1; DLG4 AND PRKCABP</scope>
</reference>
<reference key="28">
    <citation type="journal article" date="2005" name="Mol. Biol. Cell">
        <title>Neutrophil migration across tight junctions is mediated by adhesive interactions between epithelial CAR and a JAM-like protein on neutrophils.</title>
        <authorList>
            <person name="Zen K."/>
            <person name="Liu Y."/>
            <person name="McCall I.C."/>
            <person name="Wu T."/>
            <person name="Lee W."/>
            <person name="Babbin B.A."/>
            <person name="Nusrat A."/>
            <person name="Parkos C.A."/>
        </authorList>
    </citation>
    <scope>INTERACTION WITH JAML</scope>
    <scope>DOMAIN</scope>
    <scope>FUNCTION</scope>
</reference>
<reference key="29">
    <citation type="journal article" date="2008" name="J. Cell Biol.">
        <title>JAM-L-mediated leukocyte adhesion to endothelial cells is regulated in cis by alpha4beta1 integrin activation.</title>
        <authorList>
            <person name="Luissint A.C."/>
            <person name="Lutz P.G."/>
            <person name="Calderwood D.A."/>
            <person name="Couraud P.O."/>
            <person name="Bourdoulous S."/>
        </authorList>
    </citation>
    <scope>FUNCTION IN LEUKOCYTE MIGRATION</scope>
    <scope>INTERACTION WITH JAML</scope>
</reference>
<reference key="30">
    <citation type="journal article" date="2008" name="Proc. Natl. Acad. Sci. U.S.A.">
        <title>A quantitative atlas of mitotic phosphorylation.</title>
        <authorList>
            <person name="Dephoure N."/>
            <person name="Zhou C."/>
            <person name="Villen J."/>
            <person name="Beausoleil S.A."/>
            <person name="Bakalarski C.E."/>
            <person name="Elledge S.J."/>
            <person name="Gygi S.P."/>
        </authorList>
    </citation>
    <scope>PHOSPHORYLATION [LARGE SCALE ANALYSIS] AT SER-306 AND SER-332</scope>
    <scope>IDENTIFICATION BY MASS SPECTROMETRY [LARGE SCALE ANALYSIS]</scope>
    <source>
        <tissue>Cervix carcinoma</tissue>
    </source>
</reference>
<reference key="31">
    <citation type="journal article" date="2010" name="Sci. Signal.">
        <title>Quantitative phosphoproteomics reveals widespread full phosphorylation site occupancy during mitosis.</title>
        <authorList>
            <person name="Olsen J.V."/>
            <person name="Vermeulen M."/>
            <person name="Santamaria A."/>
            <person name="Kumar C."/>
            <person name="Miller M.L."/>
            <person name="Jensen L.J."/>
            <person name="Gnad F."/>
            <person name="Cox J."/>
            <person name="Jensen T.S."/>
            <person name="Nigg E.A."/>
            <person name="Brunak S."/>
            <person name="Mann M."/>
        </authorList>
    </citation>
    <scope>IDENTIFICATION BY MASS SPECTROMETRY [LARGE SCALE ANALYSIS]</scope>
    <source>
        <tissue>Cervix carcinoma</tissue>
    </source>
</reference>
<reference key="32">
    <citation type="journal article" date="2011" name="Sci. Signal.">
        <title>System-wide temporal characterization of the proteome and phosphoproteome of human embryonic stem cell differentiation.</title>
        <authorList>
            <person name="Rigbolt K.T."/>
            <person name="Prokhorova T.A."/>
            <person name="Akimov V."/>
            <person name="Henningsen J."/>
            <person name="Johansen P.T."/>
            <person name="Kratchmarova I."/>
            <person name="Kassem M."/>
            <person name="Mann M."/>
            <person name="Olsen J.V."/>
            <person name="Blagoev B."/>
        </authorList>
    </citation>
    <scope>IDENTIFICATION BY MASS SPECTROMETRY [LARGE SCALE ANALYSIS]</scope>
</reference>
<reference key="33">
    <citation type="journal article" date="2013" name="J. Proteome Res.">
        <title>Toward a comprehensive characterization of a human cancer cell phosphoproteome.</title>
        <authorList>
            <person name="Zhou H."/>
            <person name="Di Palma S."/>
            <person name="Preisinger C."/>
            <person name="Peng M."/>
            <person name="Polat A.N."/>
            <person name="Heck A.J."/>
            <person name="Mohammed S."/>
        </authorList>
    </citation>
    <scope>PHOSPHORYLATION [LARGE SCALE ANALYSIS] AT SER-306; SER-323 AND SER-332</scope>
    <scope>IDENTIFICATION BY MASS SPECTROMETRY [LARGE SCALE ANALYSIS]</scope>
    <source>
        <tissue>Cervix carcinoma</tissue>
    </source>
</reference>
<reference key="34">
    <citation type="journal article" date="2014" name="J. Proteomics">
        <title>An enzyme assisted RP-RPLC approach for in-depth analysis of human liver phosphoproteome.</title>
        <authorList>
            <person name="Bian Y."/>
            <person name="Song C."/>
            <person name="Cheng K."/>
            <person name="Dong M."/>
            <person name="Wang F."/>
            <person name="Huang J."/>
            <person name="Sun D."/>
            <person name="Wang L."/>
            <person name="Ye M."/>
            <person name="Zou H."/>
        </authorList>
    </citation>
    <scope>IDENTIFICATION BY MASS SPECTROMETRY [LARGE SCALE ANALYSIS]</scope>
    <source>
        <tissue>Liver</tissue>
    </source>
</reference>
<reference key="35">
    <citation type="journal article" date="1999" name="Science">
        <title>Structural analysis of the mechanism of adenovirus binding to its human cellular receptor, CAR.</title>
        <authorList>
            <person name="Bewley M.C."/>
            <person name="Springer K."/>
            <person name="Zhang Y.-B."/>
            <person name="Freimuth P."/>
            <person name="Flanagan J.M."/>
        </authorList>
    </citation>
    <scope>X-RAY CRYSTALLOGRAPHY (2.6 ANGSTROMS) OF 21-144 IN COMPLEX WITH HUMAN ADENOVIRUS 12 FIBER PROTEIN</scope>
    <scope>DISULFIDE BONDS</scope>
</reference>
<reference key="36">
    <citation type="journal article" date="2000" name="Structure">
        <title>Dimeric structure of the coxsackievirus and adenovirus receptor D1 domain at 1.7 A resolution.</title>
        <authorList>
            <person name="van Raaij M.J."/>
            <person name="Chouin E."/>
            <person name="van der Zandt H."/>
            <person name="Bergelson J.M."/>
            <person name="Cusack S."/>
        </authorList>
    </citation>
    <scope>X-RAY CRYSTALLOGRAPHY (1.7 ANGSTROMS) OF 15-140</scope>
    <scope>DOMAIN</scope>
    <scope>DISULFIDE BOND</scope>
</reference>
<reference key="37">
    <citation type="journal article" date="2004" name="Biochemistry">
        <title>Solution structure of the coxsackievirus and adenovirus receptor domain 1.</title>
        <authorList>
            <person name="Jiang S."/>
            <person name="Jacobs A."/>
            <person name="Laue T.M."/>
            <person name="Caffrey M."/>
        </authorList>
    </citation>
    <scope>STRUCTURE BY NMR OF 21-144</scope>
    <scope>DISULFIDE BONDS</scope>
</reference>
<organism>
    <name type="scientific">Homo sapiens</name>
    <name type="common">Human</name>
    <dbReference type="NCBI Taxonomy" id="9606"/>
    <lineage>
        <taxon>Eukaryota</taxon>
        <taxon>Metazoa</taxon>
        <taxon>Chordata</taxon>
        <taxon>Craniata</taxon>
        <taxon>Vertebrata</taxon>
        <taxon>Euteleostomi</taxon>
        <taxon>Mammalia</taxon>
        <taxon>Eutheria</taxon>
        <taxon>Euarchontoglires</taxon>
        <taxon>Primates</taxon>
        <taxon>Haplorrhini</taxon>
        <taxon>Catarrhini</taxon>
        <taxon>Hominidae</taxon>
        <taxon>Homo</taxon>
    </lineage>
</organism>
<gene>
    <name type="primary">CXADR</name>
    <name type="synonym">CAR</name>
</gene>
<feature type="signal peptide" evidence="3">
    <location>
        <begin position="1"/>
        <end position="19"/>
    </location>
</feature>
<feature type="chain" id="PRO_0000014739" description="Coxsackievirus and adenovirus receptor">
    <location>
        <begin position="20"/>
        <end position="365"/>
    </location>
</feature>
<feature type="topological domain" description="Extracellular" evidence="3">
    <location>
        <begin position="20"/>
        <end position="237"/>
    </location>
</feature>
<feature type="transmembrane region" description="Helical" evidence="3">
    <location>
        <begin position="238"/>
        <end position="258"/>
    </location>
</feature>
<feature type="topological domain" description="Cytoplasmic" evidence="3">
    <location>
        <begin position="259"/>
        <end position="365"/>
    </location>
</feature>
<feature type="domain" description="Ig-like C2-type 1">
    <location>
        <begin position="20"/>
        <end position="134"/>
    </location>
</feature>
<feature type="domain" description="Ig-like C2-type 2">
    <location>
        <begin position="141"/>
        <end position="228"/>
    </location>
</feature>
<feature type="region of interest" description="Disordered" evidence="5">
    <location>
        <begin position="269"/>
        <end position="343"/>
    </location>
</feature>
<feature type="short sequence motif" description="PDZ-binding">
    <location>
        <begin position="360"/>
        <end position="365"/>
    </location>
</feature>
<feature type="compositionally biased region" description="Basic and acidic residues" evidence="5">
    <location>
        <begin position="269"/>
        <end position="282"/>
    </location>
</feature>
<feature type="compositionally biased region" description="Polar residues" evidence="5">
    <location>
        <begin position="286"/>
        <end position="322"/>
    </location>
</feature>
<feature type="modified residue" description="Phosphoserine" evidence="2">
    <location>
        <position position="297"/>
    </location>
</feature>
<feature type="modified residue" description="Phosphoserine" evidence="2">
    <location>
        <position position="304"/>
    </location>
</feature>
<feature type="modified residue" description="Phosphoserine" evidence="32 33">
    <location>
        <position position="306"/>
    </location>
</feature>
<feature type="modified residue" description="Phosphoserine" evidence="33">
    <location>
        <position position="323"/>
    </location>
</feature>
<feature type="modified residue" description="Phosphoserine" evidence="32 33">
    <location>
        <position position="332"/>
    </location>
</feature>
<feature type="modified residue" description="Phosphoserine" evidence="2">
    <location>
        <position position="363"/>
    </location>
</feature>
<feature type="lipid moiety-binding region" description="S-palmitoyl cysteine" evidence="31">
    <location>
        <position position="259"/>
    </location>
</feature>
<feature type="lipid moiety-binding region" description="S-palmitoyl cysteine" evidence="31">
    <location>
        <position position="260"/>
    </location>
</feature>
<feature type="glycosylation site" description="N-linked (GlcNAc...) asparagine" evidence="3">
    <location>
        <position position="106"/>
    </location>
</feature>
<feature type="glycosylation site" description="N-linked (GlcNAc...) asparagine" evidence="3">
    <location>
        <position position="201"/>
    </location>
</feature>
<feature type="disulfide bond" evidence="7 10 18">
    <location>
        <begin position="41"/>
        <end position="120"/>
    </location>
</feature>
<feature type="disulfide bond" evidence="4 18">
    <location>
        <begin position="162"/>
        <end position="212"/>
    </location>
</feature>
<feature type="splice variant" id="VSP_014819" description="In isoform 3." evidence="27">
    <original>IILYSGDKIYDDYYPDLKG</original>
    <variation>GRCATSKEPYVHCQKLHRQ</variation>
    <location>
        <begin position="71"/>
        <end position="89"/>
    </location>
</feature>
<feature type="splice variant" id="VSP_014820" description="In isoform 3." evidence="27">
    <location>
        <begin position="90"/>
        <end position="365"/>
    </location>
</feature>
<feature type="splice variant" id="VSP_014821" description="In isoform 4." evidence="27">
    <original>V</original>
    <variation>GKMCHLQRAVRPLPEATSAVIIHPWGPCLLPTWKDIPRLSITKYQVKTLNALLRVRLSHLLR</variation>
    <location>
        <position position="139"/>
    </location>
</feature>
<feature type="splice variant" id="VSP_014822" description="In isoform 4." evidence="27">
    <location>
        <begin position="140"/>
        <end position="365"/>
    </location>
</feature>
<feature type="splice variant" id="VSP_047729" description="In isoform 7." evidence="28">
    <original>EMTSSVISVKNASSEYSGTYSCTVRNRVGSDQCLLRLNVVPP</original>
    <variation>A</variation>
    <location>
        <begin position="191"/>
        <end position="232"/>
    </location>
</feature>
<feature type="splice variant" id="VSP_014823" description="In isoform 5." evidence="27">
    <original>E</original>
    <variation>GKMCHLQRAVRPLPEATSAVIIHPWGPCLLPTWKDIPRLSITKYQVKTLNALLRVRLSHLLR</variation>
    <location>
        <position position="191"/>
    </location>
</feature>
<feature type="splice variant" id="VSP_014824" description="In isoform 5." evidence="27">
    <location>
        <begin position="192"/>
        <end position="365"/>
    </location>
</feature>
<feature type="splice variant" id="VSP_047357" description="In isoform 6." evidence="30">
    <original>VAAPNLSRMGAIPVMIPAQSKDGSIV</original>
    <variation>FKYPYKTDGITVV</variation>
    <location>
        <begin position="340"/>
        <end position="365"/>
    </location>
</feature>
<feature type="splice variant" id="VSP_014825" description="In isoform 2." evidence="29">
    <original>VAAPNL</original>
    <variation>FKYPY</variation>
    <location>
        <begin position="340"/>
        <end position="345"/>
    </location>
</feature>
<feature type="splice variant" id="VSP_014826" description="In isoform 2." evidence="29">
    <location>
        <begin position="346"/>
        <end position="365"/>
    </location>
</feature>
<feature type="sequence variant" id="VAR_049871" description="In dbSNP:rs34727960.">
    <original>S</original>
    <variation>R</variation>
    <location>
        <position position="323"/>
    </location>
</feature>
<feature type="mutagenesis site" description="Abolishes binding to adenovirus type 5." evidence="8">
    <original>VII</original>
    <variation>AID</variation>
    <location>
        <begin position="70"/>
        <end position="72"/>
    </location>
</feature>
<feature type="mutagenesis site" description="Loss of palmitoylation and altered localization." evidence="15">
    <original>CC</original>
    <variation>AA</variation>
    <location>
        <begin position="259"/>
        <end position="260"/>
    </location>
</feature>
<feature type="mutagenesis site" description="Affects basolateral localization in airway epithelial cells." evidence="11">
    <original>Y</original>
    <variation>A</variation>
    <location>
        <position position="318"/>
    </location>
</feature>
<feature type="mutagenesis site" description="Affects basolateral localization in airway epithelial cells." evidence="11">
    <original>LSRM</original>
    <variation>AAAA</variation>
    <location>
        <begin position="345"/>
        <end position="348"/>
    </location>
</feature>
<feature type="strand" evidence="34">
    <location>
        <begin position="21"/>
        <end position="32"/>
    </location>
</feature>
<feature type="strand" evidence="34">
    <location>
        <begin position="37"/>
        <end position="39"/>
    </location>
</feature>
<feature type="strand" evidence="34">
    <location>
        <begin position="42"/>
        <end position="44"/>
    </location>
</feature>
<feature type="strand" evidence="34">
    <location>
        <begin position="53"/>
        <end position="61"/>
    </location>
</feature>
<feature type="strand" evidence="35">
    <location>
        <begin position="62"/>
        <end position="65"/>
    </location>
</feature>
<feature type="strand" evidence="34">
    <location>
        <begin position="68"/>
        <end position="75"/>
    </location>
</feature>
<feature type="strand" evidence="34">
    <location>
        <begin position="78"/>
        <end position="80"/>
    </location>
</feature>
<feature type="turn" evidence="34">
    <location>
        <begin position="86"/>
        <end position="90"/>
    </location>
</feature>
<feature type="strand" evidence="34">
    <location>
        <begin position="91"/>
        <end position="93"/>
    </location>
</feature>
<feature type="helix" evidence="34">
    <location>
        <begin position="98"/>
        <end position="100"/>
    </location>
</feature>
<feature type="strand" evidence="34">
    <location>
        <begin position="105"/>
        <end position="107"/>
    </location>
</feature>
<feature type="helix" evidence="34">
    <location>
        <begin position="112"/>
        <end position="114"/>
    </location>
</feature>
<feature type="strand" evidence="34">
    <location>
        <begin position="116"/>
        <end position="124"/>
    </location>
</feature>
<feature type="strand" evidence="34">
    <location>
        <begin position="127"/>
        <end position="138"/>
    </location>
</feature>
<feature type="strand" evidence="36">
    <location>
        <begin position="145"/>
        <end position="148"/>
    </location>
</feature>
<feature type="strand" evidence="36">
    <location>
        <begin position="156"/>
        <end position="163"/>
    </location>
</feature>
<feature type="strand" evidence="36">
    <location>
        <begin position="166"/>
        <end position="168"/>
    </location>
</feature>
<feature type="strand" evidence="36">
    <location>
        <begin position="171"/>
        <end position="178"/>
    </location>
</feature>
<feature type="helix" evidence="36">
    <location>
        <begin position="185"/>
        <end position="192"/>
    </location>
</feature>
<feature type="strand" evidence="36">
    <location>
        <begin position="195"/>
        <end position="201"/>
    </location>
</feature>
<feature type="strand" evidence="36">
    <location>
        <begin position="208"/>
        <end position="215"/>
    </location>
</feature>
<feature type="strand" evidence="36">
    <location>
        <begin position="221"/>
        <end position="227"/>
    </location>
</feature>
<feature type="sequence conflict" description="In Ref. 14; AAD31772." evidence="30" ref="14">
    <original>P</original>
    <variation>A</variation>
    <location sequence="P78310-2">
        <position position="343"/>
    </location>
</feature>
<accession>P78310</accession>
<accession>B2R8V8</accession>
<accession>B7WPI3</accession>
<accession>D3YHP0</accession>
<accession>O00694</accession>
<accession>Q8WWT6</accession>
<accession>Q8WWT7</accession>
<accession>Q8WWT8</accession>
<accession>Q9UKV4</accession>
<name>CXAR_HUMAN</name>
<protein>
    <recommendedName>
        <fullName>Coxsackievirus and adenovirus receptor</fullName>
        <shortName>CAR</shortName>
        <shortName>hCAR</shortName>
    </recommendedName>
    <alternativeName>
        <fullName>CVB3-binding protein</fullName>
    </alternativeName>
    <alternativeName>
        <fullName>Coxsackievirus B-adenovirus receptor</fullName>
    </alternativeName>
    <alternativeName>
        <fullName>HCVADR</fullName>
    </alternativeName>
</protein>
<comment type="function">
    <text evidence="14 16 23 24 25">Component of the epithelial apical junction complex that may function as a homophilic cell adhesion molecule and is essential for tight junction integrity. Also involved in transepithelial migration of leukocytes through adhesive interactions with JAML a transmembrane protein of the plasma membrane of leukocytes. The interaction between both receptors also mediates the activation of gamma-delta T-cells, a subpopulation of T-cells residing in epithelia and involved in tissue homeostasis and repair. Upon epithelial CXADR-binding, JAML induces downstream cell signaling events in gamma-delta T-cells through PI3-kinase and MAP kinases. It results in proliferation and production of cytokines and growth factors by T-cells that in turn stimulate epithelial tissues repair.</text>
</comment>
<comment type="function">
    <text evidence="7 8 16 26">(Microbial infection) Acts as a receptor for adenovirus type C.</text>
</comment>
<comment type="function">
    <text evidence="9 19">(Microbial infection) Acts as a receptor for Coxsackievirus B1 to B6.</text>
</comment>
<comment type="subunit">
    <text evidence="14 17 20 21 23 24">Monomer. May form homodimer. Interacts with LNX, MAGI1, DLG4, PRKCABP, TJP1 and CTNNB1. Interacts with MPDZ; recruits MPDZ to intercellular contact sites. Interacts with JAML (homodimeric form). Secreted isoform 3, isoform 4 and isoform 5 can interact with the extracellular domain of the receptor.</text>
</comment>
<comment type="subunit">
    <text evidence="7 8 9 16 19 26">(Microbial infection) Interacts with adenovirus subgroups A, C, D, E and F fiber proteins as well as coxsackievirus B1, B2, B3, B4, B5 and B6 capsid proteins (PubMed:10567268, PubMed:10666333, PubMed:10814575, PubMed:12297051, PubMed:14978041, PubMed:9733828).</text>
</comment>
<comment type="interaction">
    <interactant intactId="EBI-747931">
        <id>P78310</id>
    </interactant>
    <interactant intactId="EBI-12109402">
        <id>Q86W74-2</id>
        <label>ANKRD46</label>
    </interactant>
    <organismsDiffer>false</organismsDiffer>
    <experiments>3</experiments>
</comment>
<comment type="interaction">
    <interactant intactId="EBI-747931">
        <id>P78310</id>
    </interactant>
    <interactant intactId="EBI-2876774">
        <id>Q92520</id>
        <label>FAM3C</label>
    </interactant>
    <organismsDiffer>false</organismsDiffer>
    <experiments>3</experiments>
</comment>
<comment type="interaction">
    <interactant intactId="EBI-747931">
        <id>P78310</id>
    </interactant>
    <interactant intactId="EBI-3932027">
        <id>P21145</id>
        <label>MAL</label>
    </interactant>
    <organismsDiffer>false</organismsDiffer>
    <experiments>3</experiments>
</comment>
<comment type="subcellular location">
    <molecule>Isoform 1</molecule>
    <subcellularLocation>
        <location evidence="22">Cell membrane</location>
        <topology evidence="3">Single-pass type I membrane protein</topology>
    </subcellularLocation>
    <subcellularLocation>
        <location evidence="11 15 16 21">Basolateral cell membrane</location>
        <topology evidence="3">Single-pass type I membrane protein</topology>
    </subcellularLocation>
    <subcellularLocation>
        <location evidence="14 16">Cell junction</location>
        <location evidence="14 16">Tight junction</location>
    </subcellularLocation>
    <subcellularLocation>
        <location evidence="16">Cell junction</location>
        <location evidence="16">Adherens junction</location>
    </subcellularLocation>
    <text evidence="11 16">In epithelial cells localizes to the apical junction complex composed of tight and adherens junctions (PubMed:12297051). In airway epithelial cells localized to basolateral membrane but not to apical surface (PubMed:11316797).</text>
</comment>
<comment type="subcellular location">
    <molecule>Isoform 3</molecule>
    <subcellularLocation>
        <location evidence="19">Secreted</location>
    </subcellularLocation>
</comment>
<comment type="subcellular location">
    <molecule>Isoform 4</molecule>
    <subcellularLocation>
        <location evidence="19">Secreted</location>
    </subcellularLocation>
</comment>
<comment type="subcellular location">
    <molecule>Isoform 5</molecule>
    <subcellularLocation>
        <location evidence="19">Secreted</location>
    </subcellularLocation>
</comment>
<comment type="alternative products">
    <event type="alternative splicing"/>
    <isoform>
        <id>P78310-1</id>
        <name>1</name>
        <name>SIV</name>
        <sequence type="displayed"/>
    </isoform>
    <isoform>
        <id>P78310-2</id>
        <name>2</name>
        <name>CAR2</name>
        <name>HCAR2</name>
        <name>TVV</name>
        <sequence type="described" ref="VSP_014825 VSP_014826"/>
    </isoform>
    <isoform>
        <id>P78310-3</id>
        <name>3</name>
        <name>CAR2/7</name>
        <name>Gamma</name>
        <sequence type="described" ref="VSP_014819 VSP_014820"/>
    </isoform>
    <isoform>
        <id>P78310-4</id>
        <name>4</name>
        <name>CAR3/7</name>
        <sequence type="described" ref="VSP_014821 VSP_014822"/>
    </isoform>
    <isoform>
        <id>P78310-5</id>
        <name>5</name>
        <name>CAR4/7</name>
        <name>Beta</name>
        <sequence type="described" ref="VSP_014823 VSP_014824"/>
    </isoform>
    <isoform>
        <id>P78310-6</id>
        <name>6</name>
        <sequence type="described" ref="VSP_047357"/>
    </isoform>
    <isoform>
        <id>P78310-7</id>
        <name>7</name>
        <name>CAR 4/6</name>
        <sequence type="described" ref="VSP_047729"/>
    </isoform>
</comment>
<comment type="tissue specificity">
    <text evidence="6 12 13 25">Expressed in pancreas, brain, heart, small intestine, testis, prostate and at a lower level in liver and lung. Isoform 5 is ubiquitously expressed. Isoform 3 is expressed in heart, lung and pancreas. In skeletal muscle, isoform 1 is found at the neuromuscular junction and isoform 2 is found in blood vessels. In cardiac muscle, isoform 1 and isoform 2 are found at intercalated disks. In heart expressed in subendothelial layers of the vessel wall but not in the luminal endothelial surface. Expression is elevated in hearts with dilated cardiomyopathy.</text>
</comment>
<comment type="domain">
    <text>The Ig-like C2-type 1 domain mediates homodimerization and interaction with JAML.</text>
</comment>
<comment type="domain">
    <text>The PDZ-binding motif mediates interaction with MPDZ and MAGI1.</text>
</comment>
<comment type="PTM">
    <text evidence="1">N-glycosylated.</text>
</comment>
<comment type="PTM">
    <text evidence="15">Palmitoylated on Cys-259 and/or Cys-260; required for proper localization to the plasma membrane.</text>
</comment>